<reference key="1">
    <citation type="journal article" date="2005" name="J. Bacteriol.">
        <title>Whole-genome sequencing of Staphylococcus haemolyticus uncovers the extreme plasticity of its genome and the evolution of human-colonizing staphylococcal species.</title>
        <authorList>
            <person name="Takeuchi F."/>
            <person name="Watanabe S."/>
            <person name="Baba T."/>
            <person name="Yuzawa H."/>
            <person name="Ito T."/>
            <person name="Morimoto Y."/>
            <person name="Kuroda M."/>
            <person name="Cui L."/>
            <person name="Takahashi M."/>
            <person name="Ankai A."/>
            <person name="Baba S."/>
            <person name="Fukui S."/>
            <person name="Lee J.C."/>
            <person name="Hiramatsu K."/>
        </authorList>
    </citation>
    <scope>NUCLEOTIDE SEQUENCE [LARGE SCALE GENOMIC DNA]</scope>
    <source>
        <strain>JCSC1435</strain>
    </source>
</reference>
<protein>
    <recommendedName>
        <fullName>Acylphosphatase</fullName>
        <ecNumber>3.6.1.7</ecNumber>
    </recommendedName>
    <alternativeName>
        <fullName>Acylphosphate phosphohydrolase</fullName>
    </alternativeName>
</protein>
<evidence type="ECO:0000255" key="1">
    <source>
        <dbReference type="PROSITE-ProRule" id="PRU00520"/>
    </source>
</evidence>
<evidence type="ECO:0000305" key="2"/>
<name>ACYP_STAHJ</name>
<proteinExistence type="inferred from homology"/>
<accession>Q4L6A9</accession>
<sequence>MKQKHLQVFGTVQGVGFRYYTQRLANKYNILGTVQNVDDYVEIYAIGNDDDLEQFINAVTEGASPASHVTHYELEDTNVSEDFSDFKSI</sequence>
<feature type="chain" id="PRO_0000326819" description="Acylphosphatase">
    <location>
        <begin position="1"/>
        <end position="89"/>
    </location>
</feature>
<feature type="domain" description="Acylphosphatase-like" evidence="1">
    <location>
        <begin position="3"/>
        <end position="89"/>
    </location>
</feature>
<feature type="active site" evidence="1">
    <location>
        <position position="18"/>
    </location>
</feature>
<feature type="active site" evidence="1">
    <location>
        <position position="36"/>
    </location>
</feature>
<gene>
    <name type="primary">acyP</name>
    <name type="ordered locus">SH1507</name>
</gene>
<organism>
    <name type="scientific">Staphylococcus haemolyticus (strain JCSC1435)</name>
    <dbReference type="NCBI Taxonomy" id="279808"/>
    <lineage>
        <taxon>Bacteria</taxon>
        <taxon>Bacillati</taxon>
        <taxon>Bacillota</taxon>
        <taxon>Bacilli</taxon>
        <taxon>Bacillales</taxon>
        <taxon>Staphylococcaceae</taxon>
        <taxon>Staphylococcus</taxon>
    </lineage>
</organism>
<keyword id="KW-0378">Hydrolase</keyword>
<comment type="catalytic activity">
    <reaction>
        <text>an acyl phosphate + H2O = a carboxylate + phosphate + H(+)</text>
        <dbReference type="Rhea" id="RHEA:14965"/>
        <dbReference type="ChEBI" id="CHEBI:15377"/>
        <dbReference type="ChEBI" id="CHEBI:15378"/>
        <dbReference type="ChEBI" id="CHEBI:29067"/>
        <dbReference type="ChEBI" id="CHEBI:43474"/>
        <dbReference type="ChEBI" id="CHEBI:59918"/>
        <dbReference type="EC" id="3.6.1.7"/>
    </reaction>
</comment>
<comment type="similarity">
    <text evidence="2">Belongs to the acylphosphatase family.</text>
</comment>
<dbReference type="EC" id="3.6.1.7"/>
<dbReference type="EMBL" id="AP006716">
    <property type="protein sequence ID" value="BAE04816.1"/>
    <property type="molecule type" value="Genomic_DNA"/>
</dbReference>
<dbReference type="RefSeq" id="WP_011275800.1">
    <property type="nucleotide sequence ID" value="NC_007168.1"/>
</dbReference>
<dbReference type="SMR" id="Q4L6A9"/>
<dbReference type="KEGG" id="sha:SH1507"/>
<dbReference type="eggNOG" id="COG1254">
    <property type="taxonomic scope" value="Bacteria"/>
</dbReference>
<dbReference type="HOGENOM" id="CLU_141932_2_1_9"/>
<dbReference type="OrthoDB" id="9808093at2"/>
<dbReference type="Proteomes" id="UP000000543">
    <property type="component" value="Chromosome"/>
</dbReference>
<dbReference type="GO" id="GO:0003998">
    <property type="term" value="F:acylphosphatase activity"/>
    <property type="evidence" value="ECO:0007669"/>
    <property type="project" value="UniProtKB-EC"/>
</dbReference>
<dbReference type="GO" id="GO:0016743">
    <property type="term" value="F:carboxyl- or carbamoyltransferase activity"/>
    <property type="evidence" value="ECO:0007669"/>
    <property type="project" value="TreeGrafter"/>
</dbReference>
<dbReference type="GO" id="GO:0008270">
    <property type="term" value="F:zinc ion binding"/>
    <property type="evidence" value="ECO:0007669"/>
    <property type="project" value="TreeGrafter"/>
</dbReference>
<dbReference type="GO" id="GO:0051604">
    <property type="term" value="P:protein maturation"/>
    <property type="evidence" value="ECO:0007669"/>
    <property type="project" value="TreeGrafter"/>
</dbReference>
<dbReference type="Gene3D" id="3.30.70.100">
    <property type="match status" value="1"/>
</dbReference>
<dbReference type="InterPro" id="IPR001792">
    <property type="entry name" value="Acylphosphatase-like_dom"/>
</dbReference>
<dbReference type="InterPro" id="IPR036046">
    <property type="entry name" value="Acylphosphatase-like_dom_sf"/>
</dbReference>
<dbReference type="InterPro" id="IPR017968">
    <property type="entry name" value="Acylphosphatase_CS"/>
</dbReference>
<dbReference type="InterPro" id="IPR051060">
    <property type="entry name" value="Carbamoyltrans_HypF-like"/>
</dbReference>
<dbReference type="NCBIfam" id="NF011005">
    <property type="entry name" value="PRK14431.1"/>
    <property type="match status" value="1"/>
</dbReference>
<dbReference type="PANTHER" id="PTHR42959">
    <property type="entry name" value="CARBAMOYLTRANSFERASE"/>
    <property type="match status" value="1"/>
</dbReference>
<dbReference type="PANTHER" id="PTHR42959:SF1">
    <property type="entry name" value="CARBAMOYLTRANSFERASE HYPF"/>
    <property type="match status" value="1"/>
</dbReference>
<dbReference type="Pfam" id="PF00708">
    <property type="entry name" value="Acylphosphatase"/>
    <property type="match status" value="1"/>
</dbReference>
<dbReference type="SUPFAM" id="SSF54975">
    <property type="entry name" value="Acylphosphatase/BLUF domain-like"/>
    <property type="match status" value="1"/>
</dbReference>
<dbReference type="PROSITE" id="PS00150">
    <property type="entry name" value="ACYLPHOSPHATASE_1"/>
    <property type="match status" value="1"/>
</dbReference>
<dbReference type="PROSITE" id="PS51160">
    <property type="entry name" value="ACYLPHOSPHATASE_3"/>
    <property type="match status" value="1"/>
</dbReference>